<evidence type="ECO:0000255" key="1">
    <source>
        <dbReference type="HAMAP-Rule" id="MF_01588"/>
    </source>
</evidence>
<gene>
    <name evidence="1" type="primary">ligA</name>
    <name type="ordered locus">Bphy_1343</name>
</gene>
<organism>
    <name type="scientific">Paraburkholderia phymatum (strain DSM 17167 / CIP 108236 / LMG 21445 / STM815)</name>
    <name type="common">Burkholderia phymatum</name>
    <dbReference type="NCBI Taxonomy" id="391038"/>
    <lineage>
        <taxon>Bacteria</taxon>
        <taxon>Pseudomonadati</taxon>
        <taxon>Pseudomonadota</taxon>
        <taxon>Betaproteobacteria</taxon>
        <taxon>Burkholderiales</taxon>
        <taxon>Burkholderiaceae</taxon>
        <taxon>Paraburkholderia</taxon>
    </lineage>
</organism>
<feature type="chain" id="PRO_0000380326" description="DNA ligase">
    <location>
        <begin position="1"/>
        <end position="683"/>
    </location>
</feature>
<feature type="domain" description="BRCT" evidence="1">
    <location>
        <begin position="602"/>
        <end position="683"/>
    </location>
</feature>
<feature type="active site" description="N6-AMP-lysine intermediate" evidence="1">
    <location>
        <position position="124"/>
    </location>
</feature>
<feature type="binding site" evidence="1">
    <location>
        <begin position="42"/>
        <end position="46"/>
    </location>
    <ligand>
        <name>NAD(+)</name>
        <dbReference type="ChEBI" id="CHEBI:57540"/>
    </ligand>
</feature>
<feature type="binding site" evidence="1">
    <location>
        <begin position="91"/>
        <end position="92"/>
    </location>
    <ligand>
        <name>NAD(+)</name>
        <dbReference type="ChEBI" id="CHEBI:57540"/>
    </ligand>
</feature>
<feature type="binding site" evidence="1">
    <location>
        <position position="122"/>
    </location>
    <ligand>
        <name>NAD(+)</name>
        <dbReference type="ChEBI" id="CHEBI:57540"/>
    </ligand>
</feature>
<feature type="binding site" evidence="1">
    <location>
        <position position="145"/>
    </location>
    <ligand>
        <name>NAD(+)</name>
        <dbReference type="ChEBI" id="CHEBI:57540"/>
    </ligand>
</feature>
<feature type="binding site" evidence="1">
    <location>
        <position position="182"/>
    </location>
    <ligand>
        <name>NAD(+)</name>
        <dbReference type="ChEBI" id="CHEBI:57540"/>
    </ligand>
</feature>
<feature type="binding site" evidence="1">
    <location>
        <position position="299"/>
    </location>
    <ligand>
        <name>NAD(+)</name>
        <dbReference type="ChEBI" id="CHEBI:57540"/>
    </ligand>
</feature>
<feature type="binding site" evidence="1">
    <location>
        <position position="323"/>
    </location>
    <ligand>
        <name>NAD(+)</name>
        <dbReference type="ChEBI" id="CHEBI:57540"/>
    </ligand>
</feature>
<feature type="binding site" evidence="1">
    <location>
        <position position="417"/>
    </location>
    <ligand>
        <name>Zn(2+)</name>
        <dbReference type="ChEBI" id="CHEBI:29105"/>
    </ligand>
</feature>
<feature type="binding site" evidence="1">
    <location>
        <position position="420"/>
    </location>
    <ligand>
        <name>Zn(2+)</name>
        <dbReference type="ChEBI" id="CHEBI:29105"/>
    </ligand>
</feature>
<feature type="binding site" evidence="1">
    <location>
        <position position="435"/>
    </location>
    <ligand>
        <name>Zn(2+)</name>
        <dbReference type="ChEBI" id="CHEBI:29105"/>
    </ligand>
</feature>
<feature type="binding site" evidence="1">
    <location>
        <position position="441"/>
    </location>
    <ligand>
        <name>Zn(2+)</name>
        <dbReference type="ChEBI" id="CHEBI:29105"/>
    </ligand>
</feature>
<comment type="function">
    <text evidence="1">DNA ligase that catalyzes the formation of phosphodiester linkages between 5'-phosphoryl and 3'-hydroxyl groups in double-stranded DNA using NAD as a coenzyme and as the energy source for the reaction. It is essential for DNA replication and repair of damaged DNA.</text>
</comment>
<comment type="catalytic activity">
    <reaction evidence="1">
        <text>NAD(+) + (deoxyribonucleotide)n-3'-hydroxyl + 5'-phospho-(deoxyribonucleotide)m = (deoxyribonucleotide)n+m + AMP + beta-nicotinamide D-nucleotide.</text>
        <dbReference type="EC" id="6.5.1.2"/>
    </reaction>
</comment>
<comment type="cofactor">
    <cofactor evidence="1">
        <name>Mg(2+)</name>
        <dbReference type="ChEBI" id="CHEBI:18420"/>
    </cofactor>
    <cofactor evidence="1">
        <name>Mn(2+)</name>
        <dbReference type="ChEBI" id="CHEBI:29035"/>
    </cofactor>
</comment>
<comment type="similarity">
    <text evidence="1">Belongs to the NAD-dependent DNA ligase family. LigA subfamily.</text>
</comment>
<keyword id="KW-0227">DNA damage</keyword>
<keyword id="KW-0234">DNA repair</keyword>
<keyword id="KW-0235">DNA replication</keyword>
<keyword id="KW-0436">Ligase</keyword>
<keyword id="KW-0460">Magnesium</keyword>
<keyword id="KW-0464">Manganese</keyword>
<keyword id="KW-0479">Metal-binding</keyword>
<keyword id="KW-0520">NAD</keyword>
<keyword id="KW-1185">Reference proteome</keyword>
<keyword id="KW-0862">Zinc</keyword>
<sequence>MARTQVPDPATSAPAERALWLRDELERANYAYYVLDQPDLPDAEYDRLFKELQQIESEHPDLITPDSPTQRVGGEVASGFRPVVHDMPMLSLNNGFSDEDIAAFDKRVSDTLHHTPVDYACELKFDGLAISLRYVDGQFTQAATRGDGATGEDVTENVRTIRSIPLKLKGKRVPKLVDVRGEVLMFRRDFDKLNQRQRDAGQREFANPRNAAAGSLRQLDPKMTAQRPLSFFAYGIGVLDGIEMPGTHSELLDWYHEMGLPVNSERAVVQGAEGVLGFFHKVGEKRDKLPYDIDGVVYKVNRRDEQDALGFVSRAPRFALAHKFPAQEALTKLIAIDVQVGRTGAITPVARLEPVFVGGATVTNATLHNEDEVRRKDIRIGDTVIVRRAGDVIPEVVGALLERRPPDAREFVMPTQCPVCGSAIERLPDEAIARCSGGLFCPAQRKQALWHFAQRRALDIDGLGEKIIDQLVELNLVRTPADLFNLGFATLAELDRFAEKSAQNLIDSLEKAKHTTLARFIYALGIRHVGESTAKDLARHFGSLDPIMSATVEELLEVNDVGPIVAEAIHQFFAEEHNRTVIEQLRAPGKVTWAEGPPAPKAPQGVLAGKTVVLTGTLPNMGRDEAKELLEAAGAKVAGSVSKKTDYVVAGAEAGSKLAKAEELGIPVLDEDGMRKLLEGQTT</sequence>
<name>DNLJ_PARP8</name>
<dbReference type="EC" id="6.5.1.2" evidence="1"/>
<dbReference type="EMBL" id="CP001043">
    <property type="protein sequence ID" value="ACC70525.1"/>
    <property type="molecule type" value="Genomic_DNA"/>
</dbReference>
<dbReference type="RefSeq" id="WP_012400739.1">
    <property type="nucleotide sequence ID" value="NC_010622.1"/>
</dbReference>
<dbReference type="SMR" id="B2JID1"/>
<dbReference type="STRING" id="391038.Bphy_1343"/>
<dbReference type="KEGG" id="bph:Bphy_1343"/>
<dbReference type="eggNOG" id="COG0272">
    <property type="taxonomic scope" value="Bacteria"/>
</dbReference>
<dbReference type="HOGENOM" id="CLU_007764_2_1_4"/>
<dbReference type="OrthoDB" id="9759736at2"/>
<dbReference type="Proteomes" id="UP000001192">
    <property type="component" value="Chromosome 1"/>
</dbReference>
<dbReference type="GO" id="GO:0005829">
    <property type="term" value="C:cytosol"/>
    <property type="evidence" value="ECO:0007669"/>
    <property type="project" value="TreeGrafter"/>
</dbReference>
<dbReference type="GO" id="GO:0003677">
    <property type="term" value="F:DNA binding"/>
    <property type="evidence" value="ECO:0007669"/>
    <property type="project" value="InterPro"/>
</dbReference>
<dbReference type="GO" id="GO:0003911">
    <property type="term" value="F:DNA ligase (NAD+) activity"/>
    <property type="evidence" value="ECO:0007669"/>
    <property type="project" value="UniProtKB-UniRule"/>
</dbReference>
<dbReference type="GO" id="GO:0046872">
    <property type="term" value="F:metal ion binding"/>
    <property type="evidence" value="ECO:0007669"/>
    <property type="project" value="UniProtKB-KW"/>
</dbReference>
<dbReference type="GO" id="GO:0006281">
    <property type="term" value="P:DNA repair"/>
    <property type="evidence" value="ECO:0007669"/>
    <property type="project" value="UniProtKB-KW"/>
</dbReference>
<dbReference type="GO" id="GO:0006260">
    <property type="term" value="P:DNA replication"/>
    <property type="evidence" value="ECO:0007669"/>
    <property type="project" value="UniProtKB-KW"/>
</dbReference>
<dbReference type="CDD" id="cd17748">
    <property type="entry name" value="BRCT_DNA_ligase_like"/>
    <property type="match status" value="1"/>
</dbReference>
<dbReference type="CDD" id="cd00114">
    <property type="entry name" value="LIGANc"/>
    <property type="match status" value="1"/>
</dbReference>
<dbReference type="FunFam" id="1.10.150.20:FF:000006">
    <property type="entry name" value="DNA ligase"/>
    <property type="match status" value="1"/>
</dbReference>
<dbReference type="FunFam" id="1.10.150.20:FF:000007">
    <property type="entry name" value="DNA ligase"/>
    <property type="match status" value="1"/>
</dbReference>
<dbReference type="FunFam" id="1.10.287.610:FF:000002">
    <property type="entry name" value="DNA ligase"/>
    <property type="match status" value="1"/>
</dbReference>
<dbReference type="FunFam" id="2.40.50.140:FF:000012">
    <property type="entry name" value="DNA ligase"/>
    <property type="match status" value="1"/>
</dbReference>
<dbReference type="FunFam" id="3.30.470.30:FF:000001">
    <property type="entry name" value="DNA ligase"/>
    <property type="match status" value="1"/>
</dbReference>
<dbReference type="FunFam" id="3.40.50.10190:FF:000054">
    <property type="entry name" value="DNA ligase"/>
    <property type="match status" value="1"/>
</dbReference>
<dbReference type="Gene3D" id="6.20.10.30">
    <property type="match status" value="1"/>
</dbReference>
<dbReference type="Gene3D" id="1.10.150.20">
    <property type="entry name" value="5' to 3' exonuclease, C-terminal subdomain"/>
    <property type="match status" value="2"/>
</dbReference>
<dbReference type="Gene3D" id="3.40.50.10190">
    <property type="entry name" value="BRCT domain"/>
    <property type="match status" value="1"/>
</dbReference>
<dbReference type="Gene3D" id="3.30.470.30">
    <property type="entry name" value="DNA ligase/mRNA capping enzyme"/>
    <property type="match status" value="1"/>
</dbReference>
<dbReference type="Gene3D" id="1.10.287.610">
    <property type="entry name" value="Helix hairpin bin"/>
    <property type="match status" value="1"/>
</dbReference>
<dbReference type="Gene3D" id="2.40.50.140">
    <property type="entry name" value="Nucleic acid-binding proteins"/>
    <property type="match status" value="1"/>
</dbReference>
<dbReference type="HAMAP" id="MF_01588">
    <property type="entry name" value="DNA_ligase_A"/>
    <property type="match status" value="1"/>
</dbReference>
<dbReference type="InterPro" id="IPR001357">
    <property type="entry name" value="BRCT_dom"/>
</dbReference>
<dbReference type="InterPro" id="IPR036420">
    <property type="entry name" value="BRCT_dom_sf"/>
</dbReference>
<dbReference type="InterPro" id="IPR041663">
    <property type="entry name" value="DisA/LigA_HHH"/>
</dbReference>
<dbReference type="InterPro" id="IPR001679">
    <property type="entry name" value="DNA_ligase"/>
</dbReference>
<dbReference type="InterPro" id="IPR018239">
    <property type="entry name" value="DNA_ligase_AS"/>
</dbReference>
<dbReference type="InterPro" id="IPR033136">
    <property type="entry name" value="DNA_ligase_CS"/>
</dbReference>
<dbReference type="InterPro" id="IPR013839">
    <property type="entry name" value="DNAligase_adenylation"/>
</dbReference>
<dbReference type="InterPro" id="IPR013840">
    <property type="entry name" value="DNAligase_N"/>
</dbReference>
<dbReference type="InterPro" id="IPR003583">
    <property type="entry name" value="Hlx-hairpin-Hlx_DNA-bd_motif"/>
</dbReference>
<dbReference type="InterPro" id="IPR012340">
    <property type="entry name" value="NA-bd_OB-fold"/>
</dbReference>
<dbReference type="InterPro" id="IPR004150">
    <property type="entry name" value="NAD_DNA_ligase_OB"/>
</dbReference>
<dbReference type="InterPro" id="IPR010994">
    <property type="entry name" value="RuvA_2-like"/>
</dbReference>
<dbReference type="InterPro" id="IPR004149">
    <property type="entry name" value="Znf_DNAligase_C4"/>
</dbReference>
<dbReference type="NCBIfam" id="TIGR00575">
    <property type="entry name" value="dnlj"/>
    <property type="match status" value="1"/>
</dbReference>
<dbReference type="NCBIfam" id="NF005932">
    <property type="entry name" value="PRK07956.1"/>
    <property type="match status" value="1"/>
</dbReference>
<dbReference type="PANTHER" id="PTHR23389">
    <property type="entry name" value="CHROMOSOME TRANSMISSION FIDELITY FACTOR 18"/>
    <property type="match status" value="1"/>
</dbReference>
<dbReference type="PANTHER" id="PTHR23389:SF9">
    <property type="entry name" value="DNA LIGASE"/>
    <property type="match status" value="1"/>
</dbReference>
<dbReference type="Pfam" id="PF00533">
    <property type="entry name" value="BRCT"/>
    <property type="match status" value="1"/>
</dbReference>
<dbReference type="Pfam" id="PF01653">
    <property type="entry name" value="DNA_ligase_aden"/>
    <property type="match status" value="1"/>
</dbReference>
<dbReference type="Pfam" id="PF03120">
    <property type="entry name" value="DNA_ligase_OB"/>
    <property type="match status" value="1"/>
</dbReference>
<dbReference type="Pfam" id="PF03119">
    <property type="entry name" value="DNA_ligase_ZBD"/>
    <property type="match status" value="1"/>
</dbReference>
<dbReference type="Pfam" id="PF12826">
    <property type="entry name" value="HHH_2"/>
    <property type="match status" value="1"/>
</dbReference>
<dbReference type="Pfam" id="PF14520">
    <property type="entry name" value="HHH_5"/>
    <property type="match status" value="1"/>
</dbReference>
<dbReference type="Pfam" id="PF22745">
    <property type="entry name" value="Nlig-Ia"/>
    <property type="match status" value="1"/>
</dbReference>
<dbReference type="PIRSF" id="PIRSF001604">
    <property type="entry name" value="LigA"/>
    <property type="match status" value="1"/>
</dbReference>
<dbReference type="SMART" id="SM00292">
    <property type="entry name" value="BRCT"/>
    <property type="match status" value="1"/>
</dbReference>
<dbReference type="SMART" id="SM00278">
    <property type="entry name" value="HhH1"/>
    <property type="match status" value="4"/>
</dbReference>
<dbReference type="SMART" id="SM00532">
    <property type="entry name" value="LIGANc"/>
    <property type="match status" value="1"/>
</dbReference>
<dbReference type="SUPFAM" id="SSF52113">
    <property type="entry name" value="BRCT domain"/>
    <property type="match status" value="1"/>
</dbReference>
<dbReference type="SUPFAM" id="SSF56091">
    <property type="entry name" value="DNA ligase/mRNA capping enzyme, catalytic domain"/>
    <property type="match status" value="1"/>
</dbReference>
<dbReference type="SUPFAM" id="SSF50249">
    <property type="entry name" value="Nucleic acid-binding proteins"/>
    <property type="match status" value="1"/>
</dbReference>
<dbReference type="SUPFAM" id="SSF47781">
    <property type="entry name" value="RuvA domain 2-like"/>
    <property type="match status" value="1"/>
</dbReference>
<dbReference type="PROSITE" id="PS50172">
    <property type="entry name" value="BRCT"/>
    <property type="match status" value="1"/>
</dbReference>
<dbReference type="PROSITE" id="PS01055">
    <property type="entry name" value="DNA_LIGASE_N1"/>
    <property type="match status" value="1"/>
</dbReference>
<dbReference type="PROSITE" id="PS01056">
    <property type="entry name" value="DNA_LIGASE_N2"/>
    <property type="match status" value="1"/>
</dbReference>
<accession>B2JID1</accession>
<reference key="1">
    <citation type="journal article" date="2014" name="Stand. Genomic Sci.">
        <title>Complete genome sequence of Burkholderia phymatum STM815(T), a broad host range and efficient nitrogen-fixing symbiont of Mimosa species.</title>
        <authorList>
            <person name="Moulin L."/>
            <person name="Klonowska A."/>
            <person name="Caroline B."/>
            <person name="Booth K."/>
            <person name="Vriezen J.A."/>
            <person name="Melkonian R."/>
            <person name="James E.K."/>
            <person name="Young J.P."/>
            <person name="Bena G."/>
            <person name="Hauser L."/>
            <person name="Land M."/>
            <person name="Kyrpides N."/>
            <person name="Bruce D."/>
            <person name="Chain P."/>
            <person name="Copeland A."/>
            <person name="Pitluck S."/>
            <person name="Woyke T."/>
            <person name="Lizotte-Waniewski M."/>
            <person name="Bristow J."/>
            <person name="Riley M."/>
        </authorList>
    </citation>
    <scope>NUCLEOTIDE SEQUENCE [LARGE SCALE GENOMIC DNA]</scope>
    <source>
        <strain>DSM 17167 / CIP 108236 / LMG 21445 / STM815</strain>
    </source>
</reference>
<proteinExistence type="inferred from homology"/>
<protein>
    <recommendedName>
        <fullName evidence="1">DNA ligase</fullName>
        <ecNumber evidence="1">6.5.1.2</ecNumber>
    </recommendedName>
    <alternativeName>
        <fullName evidence="1">Polydeoxyribonucleotide synthase [NAD(+)]</fullName>
    </alternativeName>
</protein>